<feature type="chain" id="PRO_0000355969" description="Large ribosomal subunit protein uL2m">
    <location>
        <begin position="1"/>
        <end position="502"/>
    </location>
</feature>
<feature type="region of interest" description="Disordered" evidence="2">
    <location>
        <begin position="458"/>
        <end position="502"/>
    </location>
</feature>
<feature type="compositionally biased region" description="Basic and acidic residues" evidence="2">
    <location>
        <begin position="463"/>
        <end position="473"/>
    </location>
</feature>
<feature type="compositionally biased region" description="Gly residues" evidence="2">
    <location>
        <begin position="493"/>
        <end position="502"/>
    </location>
</feature>
<geneLocation type="mitochondrion"/>
<organism>
    <name type="scientific">Oryza sativa</name>
    <name type="common">Rice</name>
    <dbReference type="NCBI Taxonomy" id="4530"/>
    <lineage>
        <taxon>Eukaryota</taxon>
        <taxon>Viridiplantae</taxon>
        <taxon>Streptophyta</taxon>
        <taxon>Embryophyta</taxon>
        <taxon>Tracheophyta</taxon>
        <taxon>Spermatophyta</taxon>
        <taxon>Magnoliopsida</taxon>
        <taxon>Liliopsida</taxon>
        <taxon>Poales</taxon>
        <taxon>Poaceae</taxon>
        <taxon>BOP clade</taxon>
        <taxon>Oryzoideae</taxon>
        <taxon>Oryzeae</taxon>
        <taxon>Oryzinae</taxon>
        <taxon>Oryza</taxon>
    </lineage>
</organism>
<comment type="subcellular location">
    <subcellularLocation>
        <location>Mitochondrion</location>
    </subcellularLocation>
</comment>
<comment type="RNA editing">
    <location>
        <position position="404" evidence="1"/>
    </location>
</comment>
<comment type="similarity">
    <text evidence="3">Belongs to the universal ribosomal protein uL2 family.</text>
</comment>
<gene>
    <name type="primary">RPL2</name>
</gene>
<name>RM02_ORYSA</name>
<proteinExistence type="inferred from homology"/>
<evidence type="ECO:0000250" key="1"/>
<evidence type="ECO:0000256" key="2">
    <source>
        <dbReference type="SAM" id="MobiDB-lite"/>
    </source>
</evidence>
<evidence type="ECO:0000305" key="3"/>
<reference key="1">
    <citation type="journal article" date="2006" name="Plant Physiol.">
        <title>The rice mitochondrial genomes and their variations.</title>
        <authorList>
            <person name="Tian X."/>
            <person name="Zheng J."/>
            <person name="Hu S."/>
            <person name="Yu J."/>
        </authorList>
    </citation>
    <scope>NUCLEOTIDE SEQUENCE [GENOMIC DNA]</scope>
    <source>
        <strain>cv. PA64s</strain>
    </source>
</reference>
<accession>P0C8K6</accession>
<accession>Q8HCN7</accession>
<keyword id="KW-0496">Mitochondrion</keyword>
<keyword id="KW-0687">Ribonucleoprotein</keyword>
<keyword id="KW-0689">Ribosomal protein</keyword>
<keyword id="KW-0691">RNA editing</keyword>
<dbReference type="EMBL" id="DQ167807">
    <property type="protein sequence ID" value="AAZ99301.1"/>
    <property type="status" value="ALT_SEQ"/>
    <property type="molecule type" value="Genomic_DNA"/>
</dbReference>
<dbReference type="RefSeq" id="YP_002000581.1">
    <property type="nucleotide sequence ID" value="NC_011033.1"/>
</dbReference>
<dbReference type="iPTMnet" id="P0C8K6"/>
<dbReference type="GeneID" id="6450181"/>
<dbReference type="KEGG" id="osa:6450181"/>
<dbReference type="GO" id="GO:0005762">
    <property type="term" value="C:mitochondrial large ribosomal subunit"/>
    <property type="evidence" value="ECO:0007669"/>
    <property type="project" value="TreeGrafter"/>
</dbReference>
<dbReference type="GO" id="GO:0005739">
    <property type="term" value="C:mitochondrion"/>
    <property type="evidence" value="ECO:0000305"/>
    <property type="project" value="Gramene"/>
</dbReference>
<dbReference type="GO" id="GO:0003723">
    <property type="term" value="F:RNA binding"/>
    <property type="evidence" value="ECO:0007669"/>
    <property type="project" value="TreeGrafter"/>
</dbReference>
<dbReference type="GO" id="GO:0003735">
    <property type="term" value="F:structural constituent of ribosome"/>
    <property type="evidence" value="ECO:0007669"/>
    <property type="project" value="InterPro"/>
</dbReference>
<dbReference type="GO" id="GO:0032543">
    <property type="term" value="P:mitochondrial translation"/>
    <property type="evidence" value="ECO:0007669"/>
    <property type="project" value="TreeGrafter"/>
</dbReference>
<dbReference type="FunFam" id="2.30.30.30:FF:000001">
    <property type="entry name" value="50S ribosomal protein L2"/>
    <property type="match status" value="1"/>
</dbReference>
<dbReference type="FunFam" id="4.10.950.10:FF:000001">
    <property type="entry name" value="50S ribosomal protein L2"/>
    <property type="match status" value="1"/>
</dbReference>
<dbReference type="FunFam" id="2.40.50.140:FF:000254">
    <property type="entry name" value="Ribosomal protein L2 mitochondrion"/>
    <property type="match status" value="1"/>
</dbReference>
<dbReference type="Gene3D" id="2.30.30.30">
    <property type="match status" value="1"/>
</dbReference>
<dbReference type="Gene3D" id="2.40.50.140">
    <property type="entry name" value="Nucleic acid-binding proteins"/>
    <property type="match status" value="1"/>
</dbReference>
<dbReference type="Gene3D" id="4.10.950.10">
    <property type="entry name" value="Ribosomal protein L2, domain 3"/>
    <property type="match status" value="1"/>
</dbReference>
<dbReference type="InterPro" id="IPR012340">
    <property type="entry name" value="NA-bd_OB-fold"/>
</dbReference>
<dbReference type="InterPro" id="IPR014722">
    <property type="entry name" value="Rib_uL2_dom2"/>
</dbReference>
<dbReference type="InterPro" id="IPR002171">
    <property type="entry name" value="Ribosomal_uL2"/>
</dbReference>
<dbReference type="InterPro" id="IPR022669">
    <property type="entry name" value="Ribosomal_uL2_C"/>
</dbReference>
<dbReference type="InterPro" id="IPR022671">
    <property type="entry name" value="Ribosomal_uL2_CS"/>
</dbReference>
<dbReference type="InterPro" id="IPR014726">
    <property type="entry name" value="Ribosomal_uL2_dom3"/>
</dbReference>
<dbReference type="InterPro" id="IPR022666">
    <property type="entry name" value="Ribosomal_uL2_RNA-bd_dom"/>
</dbReference>
<dbReference type="InterPro" id="IPR008991">
    <property type="entry name" value="Translation_prot_SH3-like_sf"/>
</dbReference>
<dbReference type="PANTHER" id="PTHR13691:SF44">
    <property type="entry name" value="LARGE RIBOSOMAL SUBUNIT PROTEIN UL2MZ-RELATED"/>
    <property type="match status" value="1"/>
</dbReference>
<dbReference type="PANTHER" id="PTHR13691">
    <property type="entry name" value="RIBOSOMAL PROTEIN L2"/>
    <property type="match status" value="1"/>
</dbReference>
<dbReference type="Pfam" id="PF00181">
    <property type="entry name" value="Ribosomal_L2"/>
    <property type="match status" value="1"/>
</dbReference>
<dbReference type="Pfam" id="PF03947">
    <property type="entry name" value="Ribosomal_L2_C"/>
    <property type="match status" value="1"/>
</dbReference>
<dbReference type="SMART" id="SM01383">
    <property type="entry name" value="Ribosomal_L2"/>
    <property type="match status" value="1"/>
</dbReference>
<dbReference type="SMART" id="SM01382">
    <property type="entry name" value="Ribosomal_L2_C"/>
    <property type="match status" value="1"/>
</dbReference>
<dbReference type="SUPFAM" id="SSF50249">
    <property type="entry name" value="Nucleic acid-binding proteins"/>
    <property type="match status" value="1"/>
</dbReference>
<dbReference type="SUPFAM" id="SSF50104">
    <property type="entry name" value="Translation proteins SH3-like domain"/>
    <property type="match status" value="1"/>
</dbReference>
<dbReference type="PROSITE" id="PS00467">
    <property type="entry name" value="RIBOSOMAL_L2"/>
    <property type="match status" value="1"/>
</dbReference>
<protein>
    <recommendedName>
        <fullName evidence="3">Large ribosomal subunit protein uL2m</fullName>
    </recommendedName>
    <alternativeName>
        <fullName>60S ribosomal protein L2, mitochondrial</fullName>
    </alternativeName>
</protein>
<sequence length="502" mass="55096">MRQSIKGRALRHFTLSTGKSAGRNSSGRITVFHRGGGSKRLQRKIDLKRSTSSIGIVERIEYDPNRSSRIALVRWIEGVLPGRQRKFKTIEEFALPRKILESTTATIFCLFSFSSLSSPLAQGETASLSFGSSLGFPRIAVAGAKPAFFAERMREKKIGKKTFSLCEIRKWRTHCVLWAHRIKRKAALSWQSLRQQKTLELVGAAEHNESKLKADQGSLLPRQVLAYALCSGRPSYLHASRSFYKALLPVEASRFGSLPAKPPIGEGPKDGAYKVDRAPVTYILASHQLEAGNMVINCDCSKPSKSGFLRPAQNAHTYLRFQELGRTVNKGRVEGGSQLAASWPRPPAYRHEILDLNSKVGNSIPLADIRMGTWVHDIECHPGQGAKLARAAGTYAKIIKEPASQCLVRLPSGVEKLIDSRCRATIGIVSNPNHGARKLRKAGQSRWSGRRPIVRGVAMNPVDHPHGGGEGRTKGGRPSVSPWGKPTKAGFRAGVGVGKRRI</sequence>